<keyword id="KW-0125">Carotenoid biosynthesis</keyword>
<keyword id="KW-0963">Cytoplasm</keyword>
<keyword id="KW-0223">Dioxygenase</keyword>
<keyword id="KW-0408">Iron</keyword>
<keyword id="KW-0479">Metal-binding</keyword>
<keyword id="KW-0560">Oxidoreductase</keyword>
<keyword id="KW-1185">Reference proteome</keyword>
<proteinExistence type="evidence at protein level"/>
<organism>
    <name type="scientific">Gibberella fujikuroi (strain CBS 195.34 / IMI 58289 / NRRL A-6831)</name>
    <name type="common">Bakanae and foot rot disease fungus</name>
    <name type="synonym">Fusarium fujikuroi</name>
    <dbReference type="NCBI Taxonomy" id="1279085"/>
    <lineage>
        <taxon>Eukaryota</taxon>
        <taxon>Fungi</taxon>
        <taxon>Dikarya</taxon>
        <taxon>Ascomycota</taxon>
        <taxon>Pezizomycotina</taxon>
        <taxon>Sordariomycetes</taxon>
        <taxon>Hypocreomycetidae</taxon>
        <taxon>Hypocreales</taxon>
        <taxon>Nectriaceae</taxon>
        <taxon>Fusarium</taxon>
        <taxon>Fusarium fujikuroi species complex</taxon>
    </lineage>
</organism>
<reference key="1">
    <citation type="journal article" date="2007" name="Mol. Microbiol.">
        <title>Identification and biochemical characterization of a novel carotenoid oxygenase: elucidation of the cleavage step in the Fusarium carotenoid pathway.</title>
        <authorList>
            <person name="Prado-Cabrero A."/>
            <person name="Estrada A.F."/>
            <person name="Al-Babili S."/>
            <person name="Avalos J."/>
        </authorList>
    </citation>
    <scope>NUCLEOTIDE SEQUENCE [GENOMIC DNA]</scope>
    <scope>FUNCTION</scope>
    <scope>CATALYTIC ACTIVITY</scope>
    <scope>INDUCTION</scope>
    <source>
        <strain>CBS 195.34 / IMI 58289 / NRRL A-6831</strain>
    </source>
</reference>
<reference key="2">
    <citation type="journal article" date="2013" name="PLoS Pathog.">
        <title>Deciphering the cryptic genome: genome-wide analyses of the rice pathogen Fusarium fujikuroi reveal complex regulation of secondary metabolism and novel metabolites.</title>
        <authorList>
            <person name="Wiemann P."/>
            <person name="Sieber C.M.K."/>
            <person name="von Bargen K.W."/>
            <person name="Studt L."/>
            <person name="Niehaus E.-M."/>
            <person name="Espino J.J."/>
            <person name="Huss K."/>
            <person name="Michielse C.B."/>
            <person name="Albermann S."/>
            <person name="Wagner D."/>
            <person name="Bergner S.V."/>
            <person name="Connolly L.R."/>
            <person name="Fischer A."/>
            <person name="Reuter G."/>
            <person name="Kleigrewe K."/>
            <person name="Bald T."/>
            <person name="Wingfield B.D."/>
            <person name="Ophir R."/>
            <person name="Freeman S."/>
            <person name="Hippler M."/>
            <person name="Smith K.M."/>
            <person name="Brown D.W."/>
            <person name="Proctor R.H."/>
            <person name="Muensterkoetter M."/>
            <person name="Freitag M."/>
            <person name="Humpf H.-U."/>
            <person name="Gueldener U."/>
            <person name="Tudzynski B."/>
        </authorList>
    </citation>
    <scope>NUCLEOTIDE SEQUENCE [LARGE SCALE GENOMIC DNA]</scope>
    <source>
        <strain>CBS 195.34 / IMI 58289 / NRRL A-6831</strain>
    </source>
</reference>
<comment type="function">
    <text evidence="5 8">Torulene dioxygenase; part of pathway that mediates the biosynthesis of neurosporaxanthin, a carboxylic apocarotenoid acting as an essential protective pigments and leading to orange pigmentation (PubMed:17493127). CarT mediates the cleavage of torulene into beta-apo-4'-carotenal, the aldehyde corresponding to the acidic neurosporaxanthin (PubMed:17493127). Is also active on other monocyclic synthetic substrates such as beta-apo-8'-carotenal and beta-apo-10'-carotenal to produce beta-apo-14'-carotenal and retinal(beta-apo-15'-carotenal), respectively (PubMed:17493127). Neurosporaxanthin is synthesized from geranyl-geranyl pyrophosphate (GGPP) through several enzymatic activities. Phytoene synthase activity performed by the bifunctional enzyme carAR first produces phytoene from geranyl-geranyl pyrophosphate (GGPP). The phytoene dehydrogenase carB then introduces 4 desaturations to lead to lycopene which is substrate of the carotene cyclase activity of carAR that leads to the production of gamma-carotene. CarB then performs a 5th desaturation reaction to yield torulene. Torulene is the substrate of the dioxidase carT that breaks the molecule, removing five carbon atoms to yield beta-apo-4'-carotenal, whereas the aldehyde dehydrogenase carD mediates the last step by converting beta-apo-4'-carotenal into neurosporaxanthin (Probable).</text>
</comment>
<comment type="catalytic activity">
    <reaction evidence="5">
        <text>torulene + O2 = 4'-apo-beta-carotenal + 3-methyl-2-butenal</text>
        <dbReference type="Rhea" id="RHEA:31519"/>
        <dbReference type="ChEBI" id="CHEBI:9638"/>
        <dbReference type="ChEBI" id="CHEBI:15379"/>
        <dbReference type="ChEBI" id="CHEBI:15825"/>
        <dbReference type="ChEBI" id="CHEBI:53157"/>
        <dbReference type="EC" id="1.13.11.59"/>
    </reaction>
    <physiologicalReaction direction="left-to-right" evidence="5">
        <dbReference type="Rhea" id="RHEA:31520"/>
    </physiologicalReaction>
</comment>
<comment type="cofactor">
    <cofactor evidence="1">
        <name>Fe(2+)</name>
        <dbReference type="ChEBI" id="CHEBI:29033"/>
    </cofactor>
    <text evidence="1">Binds 1 Fe(2+) ion per subunit.</text>
</comment>
<comment type="pathway">
    <text evidence="5">Carotenoid biosynthesis.</text>
</comment>
<comment type="subcellular location">
    <subcellularLocation>
        <location evidence="2">Cytoplasm</location>
        <location evidence="2">Cytosol</location>
    </subcellularLocation>
</comment>
<comment type="induction">
    <text evidence="5">The expression is subject to photoinduction and is transcriptionally co-regulated with the genes of the other carotenoid biosynthetic enzymes.</text>
</comment>
<comment type="similarity">
    <text evidence="7">Belongs to the carotenoid oxygenase family.</text>
</comment>
<dbReference type="EC" id="1.13.11.59" evidence="5"/>
<dbReference type="EMBL" id="HF679027">
    <property type="protein sequence ID" value="CCT69028.1"/>
    <property type="molecule type" value="Genomic_DNA"/>
</dbReference>
<dbReference type="EMBL" id="AM418468">
    <property type="protein sequence ID" value="CAL90971.1"/>
    <property type="molecule type" value="Genomic_DNA"/>
</dbReference>
<dbReference type="SMR" id="S0E9A6"/>
<dbReference type="STRING" id="1279085.S0E9A6"/>
<dbReference type="EnsemblFungi" id="CCT69028">
    <property type="protein sequence ID" value="CCT69028"/>
    <property type="gene ID" value="FFUJ_07962"/>
</dbReference>
<dbReference type="KEGG" id="ag:CAL90971"/>
<dbReference type="VEuPathDB" id="FungiDB:FFUJ_07962"/>
<dbReference type="HOGENOM" id="CLU_016472_5_0_1"/>
<dbReference type="Proteomes" id="UP000016800">
    <property type="component" value="Chromosome 5"/>
</dbReference>
<dbReference type="GO" id="GO:0005829">
    <property type="term" value="C:cytosol"/>
    <property type="evidence" value="ECO:0007669"/>
    <property type="project" value="UniProtKB-SubCell"/>
</dbReference>
<dbReference type="GO" id="GO:0010436">
    <property type="term" value="F:carotenoid dioxygenase activity"/>
    <property type="evidence" value="ECO:0007669"/>
    <property type="project" value="TreeGrafter"/>
</dbReference>
<dbReference type="GO" id="GO:0046872">
    <property type="term" value="F:metal ion binding"/>
    <property type="evidence" value="ECO:0007669"/>
    <property type="project" value="UniProtKB-KW"/>
</dbReference>
<dbReference type="GO" id="GO:0016121">
    <property type="term" value="P:carotene catabolic process"/>
    <property type="evidence" value="ECO:0007669"/>
    <property type="project" value="TreeGrafter"/>
</dbReference>
<dbReference type="GO" id="GO:0016117">
    <property type="term" value="P:carotenoid biosynthetic process"/>
    <property type="evidence" value="ECO:0007669"/>
    <property type="project" value="UniProtKB-KW"/>
</dbReference>
<dbReference type="InterPro" id="IPR004294">
    <property type="entry name" value="Carotenoid_Oase"/>
</dbReference>
<dbReference type="PANTHER" id="PTHR10543">
    <property type="entry name" value="BETA-CAROTENE DIOXYGENASE"/>
    <property type="match status" value="1"/>
</dbReference>
<dbReference type="PANTHER" id="PTHR10543:SF24">
    <property type="entry name" value="CAROTENOID ISOMEROOXYGENASE"/>
    <property type="match status" value="1"/>
</dbReference>
<dbReference type="Pfam" id="PF03055">
    <property type="entry name" value="RPE65"/>
    <property type="match status" value="1"/>
</dbReference>
<dbReference type="SUPFAM" id="SSF63825">
    <property type="entry name" value="YWTD domain"/>
    <property type="match status" value="1"/>
</dbReference>
<name>CART_GIBF5</name>
<sequence length="577" mass="64489">MALNGPGVYHRTREHEQEDASDITKNILAESWKSWPNEAAFDRLEEHRGPLRLTLKGTIPSWAAGSLYRTGPGQSRVEDTARGTHFTTHWFDGFAQTHRFDIIPSEDGETQVWYSSRRQADEWIADVKKKGWRSGMTFGQKADPCVGIFAKVMTVFEPKLGNHNVALLANVPGVPKDEETEVSNGVPGPLGHRVNTSNLFVSTDYTGIRRIDPSTLQPLAETTQYDLHPSLSGPCSCSHAQRDPDSGDLFNFNLAFGRVPTYRIFRVDTASGETEVLATISDLNVPPAYMHSFFLTENHVVICIPASHYAWRGLKTQWEGNIIDSMKPFDKERKCKWLVVDRRHGKGLVATFSTPAAFFFHSINAFEKNIEDEDGTEQTDLFFDLAKYNNMDIIKGFYYDVLMDRDDATKKYWFKNDRYKNCAPTLTRYRFRLPSAPTPDTTFSASAEQVLAIPSPHAGELPTIHPLRNGKPYRYVYSASLRGLTTSVDALVKTDLDTSEAFIWTGPEGHTPGEPVFVPRPGAEAEDDGIVFSLVVDGVNEKAYILCLNGKTMEELGRAEADFAIGQGFHGIHLPAA</sequence>
<protein>
    <recommendedName>
        <fullName evidence="6">Torulene dioxygenase</fullName>
        <ecNumber evidence="5">1.13.11.59</ecNumber>
    </recommendedName>
    <alternativeName>
        <fullName evidence="6">Carotenoid biosynthesis cluster protein T</fullName>
    </alternativeName>
</protein>
<gene>
    <name evidence="6" type="primary">carT</name>
    <name type="ORF">FFUJ_07962</name>
</gene>
<feature type="chain" id="PRO_0000456843" description="Torulene dioxygenase">
    <location>
        <begin position="1"/>
        <end position="577"/>
    </location>
</feature>
<feature type="region of interest" description="Disordered" evidence="4">
    <location>
        <begin position="1"/>
        <end position="20"/>
    </location>
</feature>
<feature type="binding site" evidence="1">
    <location>
        <position position="239"/>
    </location>
    <ligand>
        <name>Fe(2+)</name>
        <dbReference type="ChEBI" id="CHEBI:29033"/>
        <note>catalytic</note>
    </ligand>
</feature>
<feature type="binding site" evidence="3">
    <location>
        <position position="291"/>
    </location>
    <ligand>
        <name>Fe(2+)</name>
        <dbReference type="ChEBI" id="CHEBI:29033"/>
        <note>catalytic</note>
    </ligand>
</feature>
<feature type="binding site" evidence="3">
    <location>
        <position position="361"/>
    </location>
    <ligand>
        <name>Fe(2+)</name>
        <dbReference type="ChEBI" id="CHEBI:29033"/>
        <note>catalytic</note>
    </ligand>
</feature>
<feature type="binding site" evidence="3">
    <location>
        <position position="570"/>
    </location>
    <ligand>
        <name>Fe(2+)</name>
        <dbReference type="ChEBI" id="CHEBI:29033"/>
        <note>catalytic</note>
    </ligand>
</feature>
<feature type="sequence conflict" description="In Ref. 1; CAL90971." evidence="7" ref="1">
    <original>VS</original>
    <variation>AL</variation>
    <location>
        <begin position="182"/>
        <end position="183"/>
    </location>
</feature>
<feature type="sequence conflict" description="In Ref. 1; CAL90971." evidence="7" ref="1">
    <original>T</original>
    <variation>A</variation>
    <location>
        <position position="269"/>
    </location>
</feature>
<evidence type="ECO:0000250" key="1">
    <source>
        <dbReference type="UniProtKB" id="Q7S860"/>
    </source>
</evidence>
<evidence type="ECO:0000250" key="2">
    <source>
        <dbReference type="UniProtKB" id="Q9I993"/>
    </source>
</evidence>
<evidence type="ECO:0000250" key="3">
    <source>
        <dbReference type="UniProtKB" id="Q9JJS6"/>
    </source>
</evidence>
<evidence type="ECO:0000256" key="4">
    <source>
        <dbReference type="SAM" id="MobiDB-lite"/>
    </source>
</evidence>
<evidence type="ECO:0000269" key="5">
    <source>
    </source>
</evidence>
<evidence type="ECO:0000303" key="6">
    <source>
    </source>
</evidence>
<evidence type="ECO:0000305" key="7"/>
<evidence type="ECO:0000305" key="8">
    <source>
    </source>
</evidence>
<accession>S0E9A6</accession>
<accession>A1KQY4</accession>